<dbReference type="EMBL" id="DS231665">
    <property type="protein sequence ID" value="ESU12054.1"/>
    <property type="status" value="ALT_SEQ"/>
    <property type="molecule type" value="Genomic_DNA"/>
</dbReference>
<dbReference type="EMBL" id="HG970334">
    <property type="protein sequence ID" value="CEF86891.1"/>
    <property type="molecule type" value="Genomic_DNA"/>
</dbReference>
<dbReference type="RefSeq" id="XP_011324630.1">
    <property type="nucleotide sequence ID" value="XM_011326328.1"/>
</dbReference>
<dbReference type="SMR" id="Q4I9U7"/>
<dbReference type="FunCoup" id="Q4I9U7">
    <property type="interactions" value="336"/>
</dbReference>
<dbReference type="STRING" id="229533.Q4I9U7"/>
<dbReference type="GeneID" id="23553158"/>
<dbReference type="KEGG" id="fgr:FGSG_06011"/>
<dbReference type="VEuPathDB" id="FungiDB:FGRAMPH1_01G19285"/>
<dbReference type="eggNOG" id="KOG2923">
    <property type="taxonomic scope" value="Eukaryota"/>
</dbReference>
<dbReference type="HOGENOM" id="CLU_2197231_0_0_1"/>
<dbReference type="InParanoid" id="Q4I9U7"/>
<dbReference type="OrthoDB" id="20968at110618"/>
<dbReference type="UniPathway" id="UPA00559"/>
<dbReference type="Proteomes" id="UP000070720">
    <property type="component" value="Chromosome 3"/>
</dbReference>
<dbReference type="GO" id="GO:0005737">
    <property type="term" value="C:cytoplasm"/>
    <property type="evidence" value="ECO:0007669"/>
    <property type="project" value="UniProtKB-SubCell"/>
</dbReference>
<dbReference type="GO" id="GO:0005634">
    <property type="term" value="C:nucleus"/>
    <property type="evidence" value="ECO:0007669"/>
    <property type="project" value="UniProtKB-SubCell"/>
</dbReference>
<dbReference type="GO" id="GO:0008198">
    <property type="term" value="F:ferrous iron binding"/>
    <property type="evidence" value="ECO:0000250"/>
    <property type="project" value="UniProtKB"/>
</dbReference>
<dbReference type="GO" id="GO:0034986">
    <property type="term" value="F:iron chaperone activity"/>
    <property type="evidence" value="ECO:0000250"/>
    <property type="project" value="UniProtKB"/>
</dbReference>
<dbReference type="GO" id="GO:0016491">
    <property type="term" value="F:oxidoreductase activity"/>
    <property type="evidence" value="ECO:0007669"/>
    <property type="project" value="UniProtKB-KW"/>
</dbReference>
<dbReference type="GO" id="GO:0017183">
    <property type="term" value="P:protein histidyl modification to diphthamide"/>
    <property type="evidence" value="ECO:0000250"/>
    <property type="project" value="UniProtKB"/>
</dbReference>
<dbReference type="GO" id="GO:0002926">
    <property type="term" value="P:tRNA wobble base 5-methoxycarbonylmethyl-2-thiouridinylation"/>
    <property type="evidence" value="ECO:0000250"/>
    <property type="project" value="UniProtKB"/>
</dbReference>
<dbReference type="FunFam" id="3.10.660.10:FF:000001">
    <property type="entry name" value="Diphthamide biosynthesis 3"/>
    <property type="match status" value="1"/>
</dbReference>
<dbReference type="Gene3D" id="3.10.660.10">
    <property type="entry name" value="DPH Zinc finger"/>
    <property type="match status" value="1"/>
</dbReference>
<dbReference type="InterPro" id="IPR044248">
    <property type="entry name" value="DPH3/4-like"/>
</dbReference>
<dbReference type="InterPro" id="IPR007872">
    <property type="entry name" value="DPH_MB_dom"/>
</dbReference>
<dbReference type="InterPro" id="IPR036671">
    <property type="entry name" value="DPH_MB_sf"/>
</dbReference>
<dbReference type="PANTHER" id="PTHR21454:SF31">
    <property type="entry name" value="DIPHTHAMIDE BIOSYNTHESIS PROTEIN 3"/>
    <property type="match status" value="1"/>
</dbReference>
<dbReference type="PANTHER" id="PTHR21454">
    <property type="entry name" value="DPH3 HOMOLOG-RELATED"/>
    <property type="match status" value="1"/>
</dbReference>
<dbReference type="Pfam" id="PF05207">
    <property type="entry name" value="Zn_ribbon_CSL"/>
    <property type="match status" value="1"/>
</dbReference>
<dbReference type="SUPFAM" id="SSF144217">
    <property type="entry name" value="CSL zinc finger"/>
    <property type="match status" value="1"/>
</dbReference>
<dbReference type="PROSITE" id="PS51074">
    <property type="entry name" value="DPH_MB"/>
    <property type="match status" value="1"/>
</dbReference>
<organism>
    <name type="scientific">Gibberella zeae (strain ATCC MYA-4620 / CBS 123657 / FGSC 9075 / NRRL 31084 / PH-1)</name>
    <name type="common">Wheat head blight fungus</name>
    <name type="synonym">Fusarium graminearum</name>
    <dbReference type="NCBI Taxonomy" id="229533"/>
    <lineage>
        <taxon>Eukaryota</taxon>
        <taxon>Fungi</taxon>
        <taxon>Dikarya</taxon>
        <taxon>Ascomycota</taxon>
        <taxon>Pezizomycotina</taxon>
        <taxon>Sordariomycetes</taxon>
        <taxon>Hypocreomycetidae</taxon>
        <taxon>Hypocreales</taxon>
        <taxon>Nectriaceae</taxon>
        <taxon>Fusarium</taxon>
    </lineage>
</organism>
<sequence length="86" mass="9394">MSDDEGISIYDEVEIEDMTFDEAMGVYQFPCPCGDKFQITLEDLLDEQDIAVCPSCSLMIRVIFDLDDLPKPPTSGASGGQVPITA</sequence>
<accession>Q4I9U7</accession>
<accession>A0A0E0SKC8</accession>
<accession>V6RCR0</accession>
<proteinExistence type="inferred from homology"/>
<protein>
    <recommendedName>
        <fullName>Diphthamide biosynthesis protein 3</fullName>
    </recommendedName>
</protein>
<gene>
    <name type="primary">DPH3</name>
    <name type="ORF">FGRRES_16587</name>
    <name type="ORF">FGSG_06011</name>
</gene>
<keyword id="KW-0963">Cytoplasm</keyword>
<keyword id="KW-0408">Iron</keyword>
<keyword id="KW-0479">Metal-binding</keyword>
<keyword id="KW-0539">Nucleus</keyword>
<keyword id="KW-0560">Oxidoreductase</keyword>
<keyword id="KW-1185">Reference proteome</keyword>
<reference key="1">
    <citation type="journal article" date="2007" name="Science">
        <title>The Fusarium graminearum genome reveals a link between localized polymorphism and pathogen specialization.</title>
        <authorList>
            <person name="Cuomo C.A."/>
            <person name="Gueldener U."/>
            <person name="Xu J.-R."/>
            <person name="Trail F."/>
            <person name="Turgeon B.G."/>
            <person name="Di Pietro A."/>
            <person name="Walton J.D."/>
            <person name="Ma L.-J."/>
            <person name="Baker S.E."/>
            <person name="Rep M."/>
            <person name="Adam G."/>
            <person name="Antoniw J."/>
            <person name="Baldwin T."/>
            <person name="Calvo S.E."/>
            <person name="Chang Y.-L."/>
            <person name="DeCaprio D."/>
            <person name="Gale L.R."/>
            <person name="Gnerre S."/>
            <person name="Goswami R.S."/>
            <person name="Hammond-Kosack K."/>
            <person name="Harris L.J."/>
            <person name="Hilburn K."/>
            <person name="Kennell J.C."/>
            <person name="Kroken S."/>
            <person name="Magnuson J.K."/>
            <person name="Mannhaupt G."/>
            <person name="Mauceli E.W."/>
            <person name="Mewes H.-W."/>
            <person name="Mitterbauer R."/>
            <person name="Muehlbauer G."/>
            <person name="Muensterkoetter M."/>
            <person name="Nelson D."/>
            <person name="O'Donnell K."/>
            <person name="Ouellet T."/>
            <person name="Qi W."/>
            <person name="Quesneville H."/>
            <person name="Roncero M.I.G."/>
            <person name="Seong K.-Y."/>
            <person name="Tetko I.V."/>
            <person name="Urban M."/>
            <person name="Waalwijk C."/>
            <person name="Ward T.J."/>
            <person name="Yao J."/>
            <person name="Birren B.W."/>
            <person name="Kistler H.C."/>
        </authorList>
    </citation>
    <scope>NUCLEOTIDE SEQUENCE [LARGE SCALE GENOMIC DNA]</scope>
    <source>
        <strain>ATCC MYA-4620 / CBS 123657 / FGSC 9075 / NRRL 31084 / PH-1</strain>
    </source>
</reference>
<reference key="2">
    <citation type="journal article" date="2010" name="Nature">
        <title>Comparative genomics reveals mobile pathogenicity chromosomes in Fusarium.</title>
        <authorList>
            <person name="Ma L.-J."/>
            <person name="van der Does H.C."/>
            <person name="Borkovich K.A."/>
            <person name="Coleman J.J."/>
            <person name="Daboussi M.-J."/>
            <person name="Di Pietro A."/>
            <person name="Dufresne M."/>
            <person name="Freitag M."/>
            <person name="Grabherr M."/>
            <person name="Henrissat B."/>
            <person name="Houterman P.M."/>
            <person name="Kang S."/>
            <person name="Shim W.-B."/>
            <person name="Woloshuk C."/>
            <person name="Xie X."/>
            <person name="Xu J.-R."/>
            <person name="Antoniw J."/>
            <person name="Baker S.E."/>
            <person name="Bluhm B.H."/>
            <person name="Breakspear A."/>
            <person name="Brown D.W."/>
            <person name="Butchko R.A.E."/>
            <person name="Chapman S."/>
            <person name="Coulson R."/>
            <person name="Coutinho P.M."/>
            <person name="Danchin E.G.J."/>
            <person name="Diener A."/>
            <person name="Gale L.R."/>
            <person name="Gardiner D.M."/>
            <person name="Goff S."/>
            <person name="Hammond-Kosack K.E."/>
            <person name="Hilburn K."/>
            <person name="Hua-Van A."/>
            <person name="Jonkers W."/>
            <person name="Kazan K."/>
            <person name="Kodira C.D."/>
            <person name="Koehrsen M."/>
            <person name="Kumar L."/>
            <person name="Lee Y.-H."/>
            <person name="Li L."/>
            <person name="Manners J.M."/>
            <person name="Miranda-Saavedra D."/>
            <person name="Mukherjee M."/>
            <person name="Park G."/>
            <person name="Park J."/>
            <person name="Park S.-Y."/>
            <person name="Proctor R.H."/>
            <person name="Regev A."/>
            <person name="Ruiz-Roldan M.C."/>
            <person name="Sain D."/>
            <person name="Sakthikumar S."/>
            <person name="Sykes S."/>
            <person name="Schwartz D.C."/>
            <person name="Turgeon B.G."/>
            <person name="Wapinski I."/>
            <person name="Yoder O."/>
            <person name="Young S."/>
            <person name="Zeng Q."/>
            <person name="Zhou S."/>
            <person name="Galagan J."/>
            <person name="Cuomo C.A."/>
            <person name="Kistler H.C."/>
            <person name="Rep M."/>
        </authorList>
    </citation>
    <scope>GENOME REANNOTATION</scope>
    <source>
        <strain>ATCC MYA-4620 / CBS 123657 / FGSC 9075 / NRRL 31084 / PH-1</strain>
    </source>
</reference>
<reference key="3">
    <citation type="journal article" date="2015" name="BMC Genomics">
        <title>The completed genome sequence of the pathogenic ascomycete fungus Fusarium graminearum.</title>
        <authorList>
            <person name="King R."/>
            <person name="Urban M."/>
            <person name="Hammond-Kosack M.C.U."/>
            <person name="Hassani-Pak K."/>
            <person name="Hammond-Kosack K.E."/>
        </authorList>
    </citation>
    <scope>NUCLEOTIDE SEQUENCE [LARGE SCALE GENOMIC DNA]</scope>
    <source>
        <strain>ATCC MYA-4620 / CBS 123657 / FGSC 9075 / NRRL 31084 / PH-1</strain>
    </source>
</reference>
<comment type="function">
    <text evidence="2">Required for the first step of diphthamide biosynthesis, a post-translational modification of histidine which occurs in elongation factor 2. DPH1 and DPH2 transfer a 3-amino-3-carboxypropyl (ACP) group from S-adenosyl-L-methionine (SAM) to a histidine residue, the reaction is assisted by a reduction system comprising KTI11/DPH3 and a NADH-dependent reductase, predominantly CBR1. Acts as an electron donor to reduce the Fe-S cluster in DPH1-DPH2 keeping the [4Fe-4S] clusters in the active and reduced state. Restores iron to DPH1-DPH2 iron-sulfur clusters which have degraded from [4Fe-4S] to [3Fe-4S] by donating an iron atom to reform [4Fe-4S] clusters, in a manner dependent on the presence of elongation factor 2 and SAM. Associates with the elongator complex and is required for tRNA Wobble base modifications mediated by the elongator complex. The elongator complex is required for multiple tRNA modifications, including mcm5U (5-methoxycarbonylmethyl uridine), mcm5s 2U (5-methoxycarbonylmethyl-2-thiouridine), and ncm5U (5-carbamoylmethyl uridine).</text>
</comment>
<comment type="catalytic activity">
    <reaction evidence="2">
        <text>[3Fe-4S](1+)-[protein] + Fe(2+)-[Dph3] = [3Fe-4S](0)-[protein] + Fe(3+)-[Dph3]</text>
        <dbReference type="Rhea" id="RHEA:71235"/>
        <dbReference type="Rhea" id="RHEA-COMP:17996"/>
        <dbReference type="Rhea" id="RHEA-COMP:17997"/>
        <dbReference type="Rhea" id="RHEA-COMP:18002"/>
        <dbReference type="Rhea" id="RHEA-COMP:18003"/>
        <dbReference type="ChEBI" id="CHEBI:29033"/>
        <dbReference type="ChEBI" id="CHEBI:29034"/>
        <dbReference type="ChEBI" id="CHEBI:33751"/>
        <dbReference type="ChEBI" id="CHEBI:47402"/>
        <dbReference type="ChEBI" id="CHEBI:83228"/>
    </reaction>
</comment>
<comment type="catalytic activity">
    <reaction evidence="2">
        <text>2 [3Fe-4S](0)-[protein] + 2 Fe(2+)-[Dph3] + NADH = 2 [4Fe-4S](1+)-[protein] + 2 [Dph3] + NAD(+) + H(+)</text>
        <dbReference type="Rhea" id="RHEA:71239"/>
        <dbReference type="Rhea" id="RHEA-COMP:17997"/>
        <dbReference type="Rhea" id="RHEA-COMP:17998"/>
        <dbReference type="Rhea" id="RHEA-COMP:18001"/>
        <dbReference type="Rhea" id="RHEA-COMP:18002"/>
        <dbReference type="ChEBI" id="CHEBI:15378"/>
        <dbReference type="ChEBI" id="CHEBI:29033"/>
        <dbReference type="ChEBI" id="CHEBI:33723"/>
        <dbReference type="ChEBI" id="CHEBI:47402"/>
        <dbReference type="ChEBI" id="CHEBI:57540"/>
        <dbReference type="ChEBI" id="CHEBI:57945"/>
        <dbReference type="ChEBI" id="CHEBI:83228"/>
    </reaction>
</comment>
<comment type="cofactor">
    <cofactor evidence="2">
        <name>Fe(2+)</name>
        <dbReference type="ChEBI" id="CHEBI:29033"/>
    </cofactor>
</comment>
<comment type="pathway">
    <text evidence="2">Protein modification; peptidyl-diphthamide biosynthesis.</text>
</comment>
<comment type="subunit">
    <text evidence="2">Component of the 2-(3-amino-3-carboxypropyl)histidine synthase complex composed of DPH1, DPH2, DPH3 and a NADH-dependent reductase, predominantly CBR1.</text>
</comment>
<comment type="subcellular location">
    <subcellularLocation>
        <location evidence="1">Cytoplasm</location>
    </subcellularLocation>
    <subcellularLocation>
        <location evidence="1">Nucleus</location>
    </subcellularLocation>
</comment>
<comment type="domain">
    <text evidence="2">The DPH-type metal-binding (MB) domain can also bind zinc. However, iron is the physiological binding partner as zinc binding impairs the protein electron donor function.</text>
</comment>
<comment type="similarity">
    <text evidence="4">Belongs to the DPH3 family.</text>
</comment>
<comment type="sequence caution" evidence="4">
    <conflict type="erroneous gene model prediction">
        <sequence resource="EMBL-CDS" id="ESU12054"/>
    </conflict>
</comment>
<name>DPH3_GIBZE</name>
<feature type="chain" id="PRO_0000082633" description="Diphthamide biosynthesis protein 3">
    <location>
        <begin position="1"/>
        <end position="86"/>
    </location>
</feature>
<feature type="domain" description="DPH-type MB" evidence="3">
    <location>
        <begin position="9"/>
        <end position="65"/>
    </location>
</feature>
<feature type="binding site" evidence="2">
    <location>
        <position position="31"/>
    </location>
    <ligand>
        <name>Fe cation</name>
        <dbReference type="ChEBI" id="CHEBI:24875"/>
    </ligand>
</feature>
<feature type="binding site" evidence="2">
    <location>
        <position position="33"/>
    </location>
    <ligand>
        <name>Fe cation</name>
        <dbReference type="ChEBI" id="CHEBI:24875"/>
    </ligand>
</feature>
<feature type="binding site" evidence="2">
    <location>
        <position position="53"/>
    </location>
    <ligand>
        <name>Fe cation</name>
        <dbReference type="ChEBI" id="CHEBI:24875"/>
    </ligand>
</feature>
<feature type="binding site" evidence="2">
    <location>
        <position position="56"/>
    </location>
    <ligand>
        <name>Fe cation</name>
        <dbReference type="ChEBI" id="CHEBI:24875"/>
    </ligand>
</feature>
<evidence type="ECO:0000250" key="1"/>
<evidence type="ECO:0000250" key="2">
    <source>
        <dbReference type="UniProtKB" id="Q3E840"/>
    </source>
</evidence>
<evidence type="ECO:0000255" key="3">
    <source>
        <dbReference type="PROSITE-ProRule" id="PRU00456"/>
    </source>
</evidence>
<evidence type="ECO:0000305" key="4"/>